<feature type="signal peptide" evidence="1">
    <location>
        <begin position="1"/>
        <end position="22"/>
    </location>
</feature>
<feature type="chain" id="PRO_0000021479" description="Invasion protein B">
    <location>
        <begin position="23"/>
        <end position="186"/>
    </location>
</feature>
<comment type="function">
    <text>Required with NudH/IalA for erythrocytes invasion.</text>
</comment>
<comment type="similarity">
    <text evidence="2">Belongs to the IalB family.</text>
</comment>
<keyword id="KW-0732">Signal</keyword>
<keyword id="KW-0843">Virulence</keyword>
<protein>
    <recommendedName>
        <fullName>Invasion protein B</fullName>
    </recommendedName>
    <alternativeName>
        <fullName>Invasion-associated locus protein B</fullName>
    </alternativeName>
</protein>
<sequence>MKKILNLFVISAFLSISSAAFAQNVKPAATKPSVATLPNGASSLTETYGLWSVNCGIQDGNKICIMLRQEVNEQDRVLLSMSVSLDGEGTVSGNLTIPFGILVSKPIRLHVDDSKSVIESNVRTCVPAGCVVPIVFDKNFVGSLRAGKQLKLSMTVAAPGEPTLDNLFVQLDGFSNALKRLTSLQK</sequence>
<reference key="1">
    <citation type="journal article" date="1995" name="Infect. Immun.">
        <title>Characterization of a two-gene locus from Bartonella bacilliformis associated with the ability to invade human erythrocytes.</title>
        <authorList>
            <person name="Mitchell S.J."/>
            <person name="Minnick M.F."/>
        </authorList>
    </citation>
    <scope>NUCLEOTIDE SEQUENCE [GENOMIC DNA]</scope>
</reference>
<reference key="2">
    <citation type="submission" date="2006-12" db="EMBL/GenBank/DDBJ databases">
        <authorList>
            <person name="Hendrix L."/>
            <person name="Mohamoud Y."/>
            <person name="Radune D."/>
            <person name="Shvartsbeyn A."/>
            <person name="Daugherty S."/>
            <person name="Dodson R."/>
            <person name="Durkin A.S."/>
            <person name="Harkins D."/>
            <person name="Huot H."/>
            <person name="Kothari S.P."/>
            <person name="Madupu R."/>
            <person name="Li J."/>
            <person name="Nelson W.C."/>
            <person name="Shrivastava S."/>
            <person name="Giglio M.G."/>
            <person name="Haft D."/>
            <person name="Selengut J."/>
            <person name="Fraser-Ligget C."/>
            <person name="Seshadri R."/>
        </authorList>
    </citation>
    <scope>NUCLEOTIDE SEQUENCE [LARGE SCALE GENOMIC DNA]</scope>
    <source>
        <strain>ATCC 35685 / KC583 / Herrer 020/F12,63</strain>
    </source>
</reference>
<gene>
    <name type="primary">ialB</name>
    <name type="synonym">invB</name>
    <name type="ordered locus">BARBAKC583_0326</name>
</gene>
<accession>P35641</accession>
<accession>A1URP3</accession>
<name>IALB_BARBK</name>
<dbReference type="EMBL" id="L25276">
    <property type="protein sequence ID" value="AAA87327.1"/>
    <property type="molecule type" value="Genomic_DNA"/>
</dbReference>
<dbReference type="EMBL" id="CP000524">
    <property type="protein sequence ID" value="ABM45086.1"/>
    <property type="molecule type" value="Genomic_DNA"/>
</dbReference>
<dbReference type="PIR" id="I40046">
    <property type="entry name" value="I40046"/>
</dbReference>
<dbReference type="RefSeq" id="WP_005766252.1">
    <property type="nucleotide sequence ID" value="NC_008783.1"/>
</dbReference>
<dbReference type="SMR" id="P35641"/>
<dbReference type="STRING" id="360095.BARBAKC583_0326"/>
<dbReference type="GeneID" id="4684760"/>
<dbReference type="KEGG" id="bbk:BARBAKC583_0326"/>
<dbReference type="PATRIC" id="fig|360095.6.peg.310"/>
<dbReference type="eggNOG" id="COG5342">
    <property type="taxonomic scope" value="Bacteria"/>
</dbReference>
<dbReference type="HOGENOM" id="CLU_096085_3_0_5"/>
<dbReference type="OrthoDB" id="9814802at2"/>
<dbReference type="Proteomes" id="UP000000643">
    <property type="component" value="Chromosome"/>
</dbReference>
<dbReference type="Gene3D" id="2.60.40.1880">
    <property type="entry name" value="Invasion associated locus B (IalB) protein"/>
    <property type="match status" value="1"/>
</dbReference>
<dbReference type="InterPro" id="IPR038696">
    <property type="entry name" value="IalB_sf"/>
</dbReference>
<dbReference type="InterPro" id="IPR010642">
    <property type="entry name" value="Invasion_prot_B"/>
</dbReference>
<dbReference type="Pfam" id="PF06776">
    <property type="entry name" value="IalB"/>
    <property type="match status" value="1"/>
</dbReference>
<organism>
    <name type="scientific">Bartonella bacilliformis (strain ATCC 35685 / KC583 / Herrer 020/F12,63)</name>
    <dbReference type="NCBI Taxonomy" id="360095"/>
    <lineage>
        <taxon>Bacteria</taxon>
        <taxon>Pseudomonadati</taxon>
        <taxon>Pseudomonadota</taxon>
        <taxon>Alphaproteobacteria</taxon>
        <taxon>Hyphomicrobiales</taxon>
        <taxon>Bartonellaceae</taxon>
        <taxon>Bartonella</taxon>
    </lineage>
</organism>
<proteinExistence type="inferred from homology"/>
<evidence type="ECO:0000255" key="1"/>
<evidence type="ECO:0000305" key="2"/>